<name>ACPS_LEUMM</name>
<evidence type="ECO:0000255" key="1">
    <source>
        <dbReference type="HAMAP-Rule" id="MF_00101"/>
    </source>
</evidence>
<keyword id="KW-0963">Cytoplasm</keyword>
<keyword id="KW-0275">Fatty acid biosynthesis</keyword>
<keyword id="KW-0276">Fatty acid metabolism</keyword>
<keyword id="KW-0444">Lipid biosynthesis</keyword>
<keyword id="KW-0443">Lipid metabolism</keyword>
<keyword id="KW-0460">Magnesium</keyword>
<keyword id="KW-0479">Metal-binding</keyword>
<keyword id="KW-1185">Reference proteome</keyword>
<keyword id="KW-0808">Transferase</keyword>
<sequence length="136" mass="15185">MIIGIGNDTEAISRVAEIVERQKSFITLILTPAERAAAAERKGKHQNEYIAGRFSAKEAFSKATGYGIGEKVQWQDIEILNEPNGRPVMKVKNFPYHTYVAITHSGDQVNTVVVIERLTLLEKMSIKLFPKRGVLS</sequence>
<comment type="function">
    <text evidence="1">Transfers the 4'-phosphopantetheine moiety from coenzyme A to a Ser of acyl-carrier-protein.</text>
</comment>
<comment type="catalytic activity">
    <reaction evidence="1">
        <text>apo-[ACP] + CoA = holo-[ACP] + adenosine 3',5'-bisphosphate + H(+)</text>
        <dbReference type="Rhea" id="RHEA:12068"/>
        <dbReference type="Rhea" id="RHEA-COMP:9685"/>
        <dbReference type="Rhea" id="RHEA-COMP:9690"/>
        <dbReference type="ChEBI" id="CHEBI:15378"/>
        <dbReference type="ChEBI" id="CHEBI:29999"/>
        <dbReference type="ChEBI" id="CHEBI:57287"/>
        <dbReference type="ChEBI" id="CHEBI:58343"/>
        <dbReference type="ChEBI" id="CHEBI:64479"/>
        <dbReference type="EC" id="2.7.8.7"/>
    </reaction>
</comment>
<comment type="cofactor">
    <cofactor evidence="1">
        <name>Mg(2+)</name>
        <dbReference type="ChEBI" id="CHEBI:18420"/>
    </cofactor>
</comment>
<comment type="subcellular location">
    <subcellularLocation>
        <location evidence="1">Cytoplasm</location>
    </subcellularLocation>
</comment>
<comment type="similarity">
    <text evidence="1">Belongs to the P-Pant transferase superfamily. AcpS family.</text>
</comment>
<proteinExistence type="inferred from homology"/>
<feature type="chain" id="PRO_1000008445" description="Holo-[acyl-carrier-protein] synthase">
    <location>
        <begin position="1"/>
        <end position="136"/>
    </location>
</feature>
<feature type="binding site" evidence="1">
    <location>
        <position position="8"/>
    </location>
    <ligand>
        <name>Mg(2+)</name>
        <dbReference type="ChEBI" id="CHEBI:18420"/>
    </ligand>
</feature>
<feature type="binding site" evidence="1">
    <location>
        <position position="58"/>
    </location>
    <ligand>
        <name>Mg(2+)</name>
        <dbReference type="ChEBI" id="CHEBI:18420"/>
    </ligand>
</feature>
<reference key="1">
    <citation type="journal article" date="2006" name="Proc. Natl. Acad. Sci. U.S.A.">
        <title>Comparative genomics of the lactic acid bacteria.</title>
        <authorList>
            <person name="Makarova K.S."/>
            <person name="Slesarev A."/>
            <person name="Wolf Y.I."/>
            <person name="Sorokin A."/>
            <person name="Mirkin B."/>
            <person name="Koonin E.V."/>
            <person name="Pavlov A."/>
            <person name="Pavlova N."/>
            <person name="Karamychev V."/>
            <person name="Polouchine N."/>
            <person name="Shakhova V."/>
            <person name="Grigoriev I."/>
            <person name="Lou Y."/>
            <person name="Rohksar D."/>
            <person name="Lucas S."/>
            <person name="Huang K."/>
            <person name="Goodstein D.M."/>
            <person name="Hawkins T."/>
            <person name="Plengvidhya V."/>
            <person name="Welker D."/>
            <person name="Hughes J."/>
            <person name="Goh Y."/>
            <person name="Benson A."/>
            <person name="Baldwin K."/>
            <person name="Lee J.-H."/>
            <person name="Diaz-Muniz I."/>
            <person name="Dosti B."/>
            <person name="Smeianov V."/>
            <person name="Wechter W."/>
            <person name="Barabote R."/>
            <person name="Lorca G."/>
            <person name="Altermann E."/>
            <person name="Barrangou R."/>
            <person name="Ganesan B."/>
            <person name="Xie Y."/>
            <person name="Rawsthorne H."/>
            <person name="Tamir D."/>
            <person name="Parker C."/>
            <person name="Breidt F."/>
            <person name="Broadbent J.R."/>
            <person name="Hutkins R."/>
            <person name="O'Sullivan D."/>
            <person name="Steele J."/>
            <person name="Unlu G."/>
            <person name="Saier M.H. Jr."/>
            <person name="Klaenhammer T."/>
            <person name="Richardson P."/>
            <person name="Kozyavkin S."/>
            <person name="Weimer B.C."/>
            <person name="Mills D.A."/>
        </authorList>
    </citation>
    <scope>NUCLEOTIDE SEQUENCE [LARGE SCALE GENOMIC DNA]</scope>
    <source>
        <strain>ATCC 8293 / DSM 20343 / BCRC 11652 / CCM 1803 / JCM 6124 / NCDO 523 / NBRC 100496 / NCIMB 8023 / NCTC 12954 / NRRL B-1118 / 37Y</strain>
    </source>
</reference>
<accession>Q03V72</accession>
<protein>
    <recommendedName>
        <fullName evidence="1">Holo-[acyl-carrier-protein] synthase</fullName>
        <shortName evidence="1">Holo-ACP synthase</shortName>
        <ecNumber evidence="1">2.7.8.7</ecNumber>
    </recommendedName>
    <alternativeName>
        <fullName evidence="1">4'-phosphopantetheinyl transferase AcpS</fullName>
    </alternativeName>
</protein>
<gene>
    <name evidence="1" type="primary">acpS</name>
    <name type="ordered locus">LEUM_1813</name>
</gene>
<organism>
    <name type="scientific">Leuconostoc mesenteroides subsp. mesenteroides (strain ATCC 8293 / DSM 20343 / BCRC 11652 / CCM 1803 / JCM 6124 / NCDO 523 / NBRC 100496 / NCIMB 8023 / NCTC 12954 / NRRL B-1118 / 37Y)</name>
    <dbReference type="NCBI Taxonomy" id="203120"/>
    <lineage>
        <taxon>Bacteria</taxon>
        <taxon>Bacillati</taxon>
        <taxon>Bacillota</taxon>
        <taxon>Bacilli</taxon>
        <taxon>Lactobacillales</taxon>
        <taxon>Lactobacillaceae</taxon>
        <taxon>Leuconostoc</taxon>
    </lineage>
</organism>
<dbReference type="EC" id="2.7.8.7" evidence="1"/>
<dbReference type="EMBL" id="CP000414">
    <property type="protein sequence ID" value="ABJ62900.1"/>
    <property type="molecule type" value="Genomic_DNA"/>
</dbReference>
<dbReference type="RefSeq" id="WP_002815841.1">
    <property type="nucleotide sequence ID" value="NC_008531.1"/>
</dbReference>
<dbReference type="SMR" id="Q03V72"/>
<dbReference type="EnsemblBacteria" id="ABJ62900">
    <property type="protein sequence ID" value="ABJ62900"/>
    <property type="gene ID" value="LEUM_1813"/>
</dbReference>
<dbReference type="GeneID" id="29577758"/>
<dbReference type="KEGG" id="lme:LEUM_1813"/>
<dbReference type="eggNOG" id="COG0736">
    <property type="taxonomic scope" value="Bacteria"/>
</dbReference>
<dbReference type="HOGENOM" id="CLU_089696_1_2_9"/>
<dbReference type="Proteomes" id="UP000000362">
    <property type="component" value="Chromosome"/>
</dbReference>
<dbReference type="GO" id="GO:0005737">
    <property type="term" value="C:cytoplasm"/>
    <property type="evidence" value="ECO:0007669"/>
    <property type="project" value="UniProtKB-SubCell"/>
</dbReference>
<dbReference type="GO" id="GO:0008897">
    <property type="term" value="F:holo-[acyl-carrier-protein] synthase activity"/>
    <property type="evidence" value="ECO:0007669"/>
    <property type="project" value="UniProtKB-UniRule"/>
</dbReference>
<dbReference type="GO" id="GO:0000287">
    <property type="term" value="F:magnesium ion binding"/>
    <property type="evidence" value="ECO:0007669"/>
    <property type="project" value="UniProtKB-UniRule"/>
</dbReference>
<dbReference type="GO" id="GO:0006633">
    <property type="term" value="P:fatty acid biosynthetic process"/>
    <property type="evidence" value="ECO:0007669"/>
    <property type="project" value="UniProtKB-UniRule"/>
</dbReference>
<dbReference type="Gene3D" id="3.90.470.20">
    <property type="entry name" value="4'-phosphopantetheinyl transferase domain"/>
    <property type="match status" value="1"/>
</dbReference>
<dbReference type="HAMAP" id="MF_00101">
    <property type="entry name" value="AcpS"/>
    <property type="match status" value="1"/>
</dbReference>
<dbReference type="InterPro" id="IPR008278">
    <property type="entry name" value="4-PPantetheinyl_Trfase_dom"/>
</dbReference>
<dbReference type="InterPro" id="IPR037143">
    <property type="entry name" value="4-PPantetheinyl_Trfase_dom_sf"/>
</dbReference>
<dbReference type="InterPro" id="IPR002582">
    <property type="entry name" value="ACPS"/>
</dbReference>
<dbReference type="InterPro" id="IPR004568">
    <property type="entry name" value="Ppantetheine-prot_Trfase_dom"/>
</dbReference>
<dbReference type="NCBIfam" id="TIGR00516">
    <property type="entry name" value="acpS"/>
    <property type="match status" value="1"/>
</dbReference>
<dbReference type="NCBIfam" id="TIGR00556">
    <property type="entry name" value="pantethn_trn"/>
    <property type="match status" value="1"/>
</dbReference>
<dbReference type="Pfam" id="PF01648">
    <property type="entry name" value="ACPS"/>
    <property type="match status" value="1"/>
</dbReference>
<dbReference type="SUPFAM" id="SSF56214">
    <property type="entry name" value="4'-phosphopantetheinyl transferase"/>
    <property type="match status" value="1"/>
</dbReference>